<keyword id="KW-0903">Direct protein sequencing</keyword>
<keyword id="KW-0325">Glycoprotein</keyword>
<keyword id="KW-0378">Hydrolase</keyword>
<keyword id="KW-1185">Reference proteome</keyword>
<keyword id="KW-0719">Serine esterase</keyword>
<name>JHEB_TRINI</name>
<comment type="function">
    <text evidence="1">JH esterase plays a crucial role in the decrease of JH activity in lepidopteran insects, by hydrolyzing the methyl ester of JH. It is also involved in the transport of JH.</text>
</comment>
<comment type="catalytic activity">
    <reaction evidence="1">
        <text>juvenile hormone I + H2O = juvenile hormone I carboxylate + methanol + H(+)</text>
        <dbReference type="Rhea" id="RHEA:46916"/>
        <dbReference type="ChEBI" id="CHEBI:15377"/>
        <dbReference type="ChEBI" id="CHEBI:15378"/>
        <dbReference type="ChEBI" id="CHEBI:17790"/>
        <dbReference type="ChEBI" id="CHEBI:83641"/>
        <dbReference type="ChEBI" id="CHEBI:87109"/>
        <dbReference type="EC" id="3.1.1.59"/>
    </reaction>
</comment>
<comment type="catalytic activity">
    <reaction evidence="1">
        <text>juvenile hormone III + H2O = juvenile hormone III carboxylate + methanol + H(+)</text>
        <dbReference type="Rhea" id="RHEA:46912"/>
        <dbReference type="ChEBI" id="CHEBI:15377"/>
        <dbReference type="ChEBI" id="CHEBI:15378"/>
        <dbReference type="ChEBI" id="CHEBI:17790"/>
        <dbReference type="ChEBI" id="CHEBI:27493"/>
        <dbReference type="ChEBI" id="CHEBI:83274"/>
        <dbReference type="EC" id="3.1.1.59"/>
    </reaction>
</comment>
<comment type="tissue specificity">
    <text>Fat body, the site of their biosynthesis, and the hemolymph where it is secreted.</text>
</comment>
<comment type="similarity">
    <text evidence="2">Belongs to the type-B carboxylesterase/lipase family.</text>
</comment>
<reference key="1">
    <citation type="journal article" date="1993" name="Biochim. Biophys. Acta">
        <title>Characterization of two major isoforms of juvenile hormone esterase from Trichoplusia ni (Lepidoptera).</title>
        <authorList>
            <person name="Jones G."/>
            <person name="Manczak M."/>
            <person name="Wozniak M."/>
            <person name="Ko'Rrati R."/>
        </authorList>
    </citation>
    <scope>PROTEIN SEQUENCE</scope>
</reference>
<feature type="chain" id="PRO_0000070293" description="Juvenile hormone esterase, isoform B">
    <location>
        <begin position="1"/>
        <end position="63" status="greater than"/>
    </location>
</feature>
<feature type="glycosylation site" description="N-linked (GlcNAc...) asparagine" evidence="2">
    <location>
        <position position="20"/>
    </location>
</feature>
<feature type="unsure residue">
    <location>
        <position position="20"/>
    </location>
</feature>
<feature type="unsure residue">
    <location>
        <position position="24"/>
    </location>
</feature>
<feature type="unsure residue">
    <location>
        <position position="31"/>
    </location>
</feature>
<feature type="unsure residue">
    <location>
        <position position="35"/>
    </location>
</feature>
<feature type="non-consecutive residues" evidence="2">
    <location>
        <begin position="12"/>
        <end position="13"/>
    </location>
</feature>
<feature type="non-consecutive residues" evidence="2">
    <location>
        <begin position="23"/>
        <end position="24"/>
    </location>
</feature>
<feature type="non-consecutive residues" evidence="2">
    <location>
        <begin position="34"/>
        <end position="35"/>
    </location>
</feature>
<feature type="non-consecutive residues" evidence="2">
    <location>
        <begin position="47"/>
        <end position="48"/>
    </location>
</feature>
<feature type="non-terminal residue">
    <location>
        <position position="63"/>
    </location>
</feature>
<proteinExistence type="evidence at protein level"/>
<organism>
    <name type="scientific">Trichoplusia ni</name>
    <name type="common">Cabbage looper</name>
    <dbReference type="NCBI Taxonomy" id="7111"/>
    <lineage>
        <taxon>Eukaryota</taxon>
        <taxon>Metazoa</taxon>
        <taxon>Ecdysozoa</taxon>
        <taxon>Arthropoda</taxon>
        <taxon>Hexapoda</taxon>
        <taxon>Insecta</taxon>
        <taxon>Pterygota</taxon>
        <taxon>Neoptera</taxon>
        <taxon>Endopterygota</taxon>
        <taxon>Lepidoptera</taxon>
        <taxon>Glossata</taxon>
        <taxon>Ditrysia</taxon>
        <taxon>Noctuoidea</taxon>
        <taxon>Noctuidae</taxon>
        <taxon>Plusiinae</taxon>
        <taxon>Trichoplusia</taxon>
    </lineage>
</organism>
<protein>
    <recommendedName>
        <fullName>Juvenile hormone esterase, isoform B</fullName>
        <shortName>JH esterase</shortName>
        <shortName>JHE-B</shortName>
        <ecNumber>3.1.1.59</ecNumber>
    </recommendedName>
</protein>
<evidence type="ECO:0000250" key="1">
    <source>
        <dbReference type="UniProtKB" id="P19985"/>
    </source>
</evidence>
<evidence type="ECO:0000305" key="2"/>
<dbReference type="EC" id="3.1.1.59"/>
<dbReference type="PIR" id="S29654">
    <property type="entry name" value="S29654"/>
</dbReference>
<dbReference type="BindingDB" id="P30810"/>
<dbReference type="ChEMBL" id="CHEMBL2366569"/>
<dbReference type="InParanoid" id="P30810"/>
<dbReference type="Proteomes" id="UP000322000">
    <property type="component" value="Unplaced"/>
</dbReference>
<dbReference type="GO" id="GO:0004453">
    <property type="term" value="F:juvenile-hormone esterase activity"/>
    <property type="evidence" value="ECO:0007669"/>
    <property type="project" value="UniProtKB-EC"/>
</dbReference>
<accession>P30810</accession>
<sequence>LPSLSADAEAPSKIDTAYYNGTKTXXAPVYQYQFGVGXIEXLTYVFKGSQYQDIESPTAYQSK</sequence>